<accession>C3L0J4</accession>
<comment type="function">
    <text evidence="1">Reversibly transfers an adenylyl group from ATP to 4'-phosphopantetheine, yielding dephospho-CoA (dPCoA) and pyrophosphate.</text>
</comment>
<comment type="catalytic activity">
    <reaction evidence="1">
        <text>(R)-4'-phosphopantetheine + ATP + H(+) = 3'-dephospho-CoA + diphosphate</text>
        <dbReference type="Rhea" id="RHEA:19801"/>
        <dbReference type="ChEBI" id="CHEBI:15378"/>
        <dbReference type="ChEBI" id="CHEBI:30616"/>
        <dbReference type="ChEBI" id="CHEBI:33019"/>
        <dbReference type="ChEBI" id="CHEBI:57328"/>
        <dbReference type="ChEBI" id="CHEBI:61723"/>
        <dbReference type="EC" id="2.7.7.3"/>
    </reaction>
</comment>
<comment type="cofactor">
    <cofactor evidence="1">
        <name>Mg(2+)</name>
        <dbReference type="ChEBI" id="CHEBI:18420"/>
    </cofactor>
</comment>
<comment type="pathway">
    <text evidence="1">Cofactor biosynthesis; coenzyme A biosynthesis; CoA from (R)-pantothenate: step 4/5.</text>
</comment>
<comment type="subunit">
    <text evidence="1">Homohexamer.</text>
</comment>
<comment type="subcellular location">
    <subcellularLocation>
        <location evidence="1">Cytoplasm</location>
    </subcellularLocation>
</comment>
<comment type="similarity">
    <text evidence="1">Belongs to the bacterial CoaD family.</text>
</comment>
<name>COAD_CLOB6</name>
<keyword id="KW-0067">ATP-binding</keyword>
<keyword id="KW-0173">Coenzyme A biosynthesis</keyword>
<keyword id="KW-0963">Cytoplasm</keyword>
<keyword id="KW-0460">Magnesium</keyword>
<keyword id="KW-0547">Nucleotide-binding</keyword>
<keyword id="KW-0548">Nucleotidyltransferase</keyword>
<keyword id="KW-0808">Transferase</keyword>
<feature type="chain" id="PRO_1000203414" description="Phosphopantetheine adenylyltransferase">
    <location>
        <begin position="1"/>
        <end position="164"/>
    </location>
</feature>
<feature type="binding site" evidence="1">
    <location>
        <begin position="9"/>
        <end position="10"/>
    </location>
    <ligand>
        <name>ATP</name>
        <dbReference type="ChEBI" id="CHEBI:30616"/>
    </ligand>
</feature>
<feature type="binding site" evidence="1">
    <location>
        <position position="9"/>
    </location>
    <ligand>
        <name>substrate</name>
    </ligand>
</feature>
<feature type="binding site" evidence="1">
    <location>
        <position position="17"/>
    </location>
    <ligand>
        <name>ATP</name>
        <dbReference type="ChEBI" id="CHEBI:30616"/>
    </ligand>
</feature>
<feature type="binding site" evidence="1">
    <location>
        <position position="41"/>
    </location>
    <ligand>
        <name>substrate</name>
    </ligand>
</feature>
<feature type="binding site" evidence="1">
    <location>
        <position position="73"/>
    </location>
    <ligand>
        <name>substrate</name>
    </ligand>
</feature>
<feature type="binding site" evidence="1">
    <location>
        <position position="87"/>
    </location>
    <ligand>
        <name>substrate</name>
    </ligand>
</feature>
<feature type="binding site" evidence="1">
    <location>
        <begin position="88"/>
        <end position="90"/>
    </location>
    <ligand>
        <name>ATP</name>
        <dbReference type="ChEBI" id="CHEBI:30616"/>
    </ligand>
</feature>
<feature type="binding site" evidence="1">
    <location>
        <position position="98"/>
    </location>
    <ligand>
        <name>ATP</name>
        <dbReference type="ChEBI" id="CHEBI:30616"/>
    </ligand>
</feature>
<feature type="binding site" evidence="1">
    <location>
        <begin position="123"/>
        <end position="129"/>
    </location>
    <ligand>
        <name>ATP</name>
        <dbReference type="ChEBI" id="CHEBI:30616"/>
    </ligand>
</feature>
<feature type="site" description="Transition state stabilizer" evidence="1">
    <location>
        <position position="17"/>
    </location>
</feature>
<proteinExistence type="inferred from homology"/>
<gene>
    <name evidence="1" type="primary">coaD</name>
    <name type="ordered locus">CLJ_B2723</name>
</gene>
<dbReference type="EC" id="2.7.7.3" evidence="1"/>
<dbReference type="EMBL" id="CP001083">
    <property type="protein sequence ID" value="ACQ51827.1"/>
    <property type="molecule type" value="Genomic_DNA"/>
</dbReference>
<dbReference type="RefSeq" id="WP_004441456.1">
    <property type="nucleotide sequence ID" value="NC_012658.1"/>
</dbReference>
<dbReference type="SMR" id="C3L0J4"/>
<dbReference type="KEGG" id="cbi:CLJ_B2723"/>
<dbReference type="HOGENOM" id="CLU_100149_0_1_9"/>
<dbReference type="UniPathway" id="UPA00241">
    <property type="reaction ID" value="UER00355"/>
</dbReference>
<dbReference type="Proteomes" id="UP000002333">
    <property type="component" value="Chromosome"/>
</dbReference>
<dbReference type="GO" id="GO:0005737">
    <property type="term" value="C:cytoplasm"/>
    <property type="evidence" value="ECO:0007669"/>
    <property type="project" value="UniProtKB-SubCell"/>
</dbReference>
<dbReference type="GO" id="GO:0005524">
    <property type="term" value="F:ATP binding"/>
    <property type="evidence" value="ECO:0007669"/>
    <property type="project" value="UniProtKB-KW"/>
</dbReference>
<dbReference type="GO" id="GO:0004595">
    <property type="term" value="F:pantetheine-phosphate adenylyltransferase activity"/>
    <property type="evidence" value="ECO:0007669"/>
    <property type="project" value="UniProtKB-UniRule"/>
</dbReference>
<dbReference type="GO" id="GO:0015937">
    <property type="term" value="P:coenzyme A biosynthetic process"/>
    <property type="evidence" value="ECO:0007669"/>
    <property type="project" value="UniProtKB-UniRule"/>
</dbReference>
<dbReference type="CDD" id="cd02163">
    <property type="entry name" value="PPAT"/>
    <property type="match status" value="1"/>
</dbReference>
<dbReference type="Gene3D" id="3.40.50.620">
    <property type="entry name" value="HUPs"/>
    <property type="match status" value="1"/>
</dbReference>
<dbReference type="HAMAP" id="MF_00151">
    <property type="entry name" value="PPAT_bact"/>
    <property type="match status" value="1"/>
</dbReference>
<dbReference type="InterPro" id="IPR004821">
    <property type="entry name" value="Cyt_trans-like"/>
</dbReference>
<dbReference type="InterPro" id="IPR001980">
    <property type="entry name" value="PPAT"/>
</dbReference>
<dbReference type="InterPro" id="IPR014729">
    <property type="entry name" value="Rossmann-like_a/b/a_fold"/>
</dbReference>
<dbReference type="NCBIfam" id="TIGR01510">
    <property type="entry name" value="coaD_prev_kdtB"/>
    <property type="match status" value="1"/>
</dbReference>
<dbReference type="NCBIfam" id="TIGR00125">
    <property type="entry name" value="cyt_tran_rel"/>
    <property type="match status" value="1"/>
</dbReference>
<dbReference type="PANTHER" id="PTHR21342">
    <property type="entry name" value="PHOSPHOPANTETHEINE ADENYLYLTRANSFERASE"/>
    <property type="match status" value="1"/>
</dbReference>
<dbReference type="PANTHER" id="PTHR21342:SF1">
    <property type="entry name" value="PHOSPHOPANTETHEINE ADENYLYLTRANSFERASE"/>
    <property type="match status" value="1"/>
</dbReference>
<dbReference type="Pfam" id="PF01467">
    <property type="entry name" value="CTP_transf_like"/>
    <property type="match status" value="1"/>
</dbReference>
<dbReference type="PRINTS" id="PR01020">
    <property type="entry name" value="LPSBIOSNTHSS"/>
</dbReference>
<dbReference type="SUPFAM" id="SSF52374">
    <property type="entry name" value="Nucleotidylyl transferase"/>
    <property type="match status" value="1"/>
</dbReference>
<sequence>MKTAVYPGSFDPITKGHLNIIKRASKVCDKLIVAVLVNPEKKGLFSVDERVEMIKRVTKNHSNVEVQCFSGLLIDFMKEKKSKVIIKGLRTMSDFEYEFKMALMNNKLDPNIETVFMMTNAKYSYLSSSSVKQVAMFGGCIKDLVPDEIIPDIKKKINHKKECI</sequence>
<evidence type="ECO:0000255" key="1">
    <source>
        <dbReference type="HAMAP-Rule" id="MF_00151"/>
    </source>
</evidence>
<organism>
    <name type="scientific">Clostridium botulinum (strain 657 / Type Ba4)</name>
    <dbReference type="NCBI Taxonomy" id="515621"/>
    <lineage>
        <taxon>Bacteria</taxon>
        <taxon>Bacillati</taxon>
        <taxon>Bacillota</taxon>
        <taxon>Clostridia</taxon>
        <taxon>Eubacteriales</taxon>
        <taxon>Clostridiaceae</taxon>
        <taxon>Clostridium</taxon>
    </lineage>
</organism>
<protein>
    <recommendedName>
        <fullName evidence="1">Phosphopantetheine adenylyltransferase</fullName>
        <ecNumber evidence="1">2.7.7.3</ecNumber>
    </recommendedName>
    <alternativeName>
        <fullName evidence="1">Dephospho-CoA pyrophosphorylase</fullName>
    </alternativeName>
    <alternativeName>
        <fullName evidence="1">Pantetheine-phosphate adenylyltransferase</fullName>
        <shortName evidence="1">PPAT</shortName>
    </alternativeName>
</protein>
<reference key="1">
    <citation type="submission" date="2008-05" db="EMBL/GenBank/DDBJ databases">
        <title>Genome sequence of Clostridium botulinum Ba4 strain 657.</title>
        <authorList>
            <person name="Shrivastava S."/>
            <person name="Brown J.L."/>
            <person name="Bruce D."/>
            <person name="Detter C."/>
            <person name="Munk C."/>
            <person name="Smith L.A."/>
            <person name="Smith T.J."/>
            <person name="Sutton G."/>
            <person name="Brettin T.S."/>
        </authorList>
    </citation>
    <scope>NUCLEOTIDE SEQUENCE [LARGE SCALE GENOMIC DNA]</scope>
    <source>
        <strain>657 / Type Ba4</strain>
    </source>
</reference>